<feature type="chain" id="PRO_1000165146" description="Shikimate kinase 2">
    <location>
        <begin position="1"/>
        <end position="174"/>
    </location>
</feature>
<feature type="region of interest" description="LID domain">
    <location>
        <begin position="112"/>
        <end position="126"/>
    </location>
</feature>
<feature type="binding site" evidence="1">
    <location>
        <begin position="12"/>
        <end position="17"/>
    </location>
    <ligand>
        <name>ATP</name>
        <dbReference type="ChEBI" id="CHEBI:30616"/>
    </ligand>
</feature>
<feature type="binding site" evidence="1">
    <location>
        <position position="16"/>
    </location>
    <ligand>
        <name>Mg(2+)</name>
        <dbReference type="ChEBI" id="CHEBI:18420"/>
    </ligand>
</feature>
<feature type="binding site" evidence="1">
    <location>
        <position position="32"/>
    </location>
    <ligand>
        <name>Mg(2+)</name>
        <dbReference type="ChEBI" id="CHEBI:18420"/>
    </ligand>
</feature>
<feature type="binding site" evidence="1">
    <location>
        <position position="34"/>
    </location>
    <ligand>
        <name>substrate</name>
    </ligand>
</feature>
<feature type="binding site" evidence="1">
    <location>
        <position position="58"/>
    </location>
    <ligand>
        <name>substrate</name>
    </ligand>
</feature>
<feature type="binding site" evidence="1">
    <location>
        <position position="79"/>
    </location>
    <ligand>
        <name>substrate</name>
    </ligand>
</feature>
<feature type="binding site" evidence="1">
    <location>
        <position position="120"/>
    </location>
    <ligand>
        <name>ATP</name>
        <dbReference type="ChEBI" id="CHEBI:30616"/>
    </ligand>
</feature>
<feature type="binding site" evidence="1">
    <location>
        <position position="139"/>
    </location>
    <ligand>
        <name>substrate</name>
    </ligand>
</feature>
<keyword id="KW-0028">Amino-acid biosynthesis</keyword>
<keyword id="KW-0057">Aromatic amino acid biosynthesis</keyword>
<keyword id="KW-0067">ATP-binding</keyword>
<keyword id="KW-0963">Cytoplasm</keyword>
<keyword id="KW-0418">Kinase</keyword>
<keyword id="KW-0460">Magnesium</keyword>
<keyword id="KW-0479">Metal-binding</keyword>
<keyword id="KW-0547">Nucleotide-binding</keyword>
<keyword id="KW-0808">Transferase</keyword>
<reference key="1">
    <citation type="journal article" date="2009" name="PLoS Genet.">
        <title>Organised genome dynamics in the Escherichia coli species results in highly diverse adaptive paths.</title>
        <authorList>
            <person name="Touchon M."/>
            <person name="Hoede C."/>
            <person name="Tenaillon O."/>
            <person name="Barbe V."/>
            <person name="Baeriswyl S."/>
            <person name="Bidet P."/>
            <person name="Bingen E."/>
            <person name="Bonacorsi S."/>
            <person name="Bouchier C."/>
            <person name="Bouvet O."/>
            <person name="Calteau A."/>
            <person name="Chiapello H."/>
            <person name="Clermont O."/>
            <person name="Cruveiller S."/>
            <person name="Danchin A."/>
            <person name="Diard M."/>
            <person name="Dossat C."/>
            <person name="Karoui M.E."/>
            <person name="Frapy E."/>
            <person name="Garry L."/>
            <person name="Ghigo J.M."/>
            <person name="Gilles A.M."/>
            <person name="Johnson J."/>
            <person name="Le Bouguenec C."/>
            <person name="Lescat M."/>
            <person name="Mangenot S."/>
            <person name="Martinez-Jehanne V."/>
            <person name="Matic I."/>
            <person name="Nassif X."/>
            <person name="Oztas S."/>
            <person name="Petit M.A."/>
            <person name="Pichon C."/>
            <person name="Rouy Z."/>
            <person name="Ruf C.S."/>
            <person name="Schneider D."/>
            <person name="Tourret J."/>
            <person name="Vacherie B."/>
            <person name="Vallenet D."/>
            <person name="Medigue C."/>
            <person name="Rocha E.P.C."/>
            <person name="Denamur E."/>
        </authorList>
    </citation>
    <scope>NUCLEOTIDE SEQUENCE [LARGE SCALE GENOMIC DNA]</scope>
    <source>
        <strain>ED1a</strain>
    </source>
</reference>
<organism>
    <name type="scientific">Escherichia coli O81 (strain ED1a)</name>
    <dbReference type="NCBI Taxonomy" id="585397"/>
    <lineage>
        <taxon>Bacteria</taxon>
        <taxon>Pseudomonadati</taxon>
        <taxon>Pseudomonadota</taxon>
        <taxon>Gammaproteobacteria</taxon>
        <taxon>Enterobacterales</taxon>
        <taxon>Enterobacteriaceae</taxon>
        <taxon>Escherichia</taxon>
    </lineage>
</organism>
<comment type="function">
    <text evidence="1">Catalyzes the specific phosphorylation of the 3-hydroxyl group of shikimic acid using ATP as a cosubstrate.</text>
</comment>
<comment type="catalytic activity">
    <reaction evidence="1">
        <text>shikimate + ATP = 3-phosphoshikimate + ADP + H(+)</text>
        <dbReference type="Rhea" id="RHEA:13121"/>
        <dbReference type="ChEBI" id="CHEBI:15378"/>
        <dbReference type="ChEBI" id="CHEBI:30616"/>
        <dbReference type="ChEBI" id="CHEBI:36208"/>
        <dbReference type="ChEBI" id="CHEBI:145989"/>
        <dbReference type="ChEBI" id="CHEBI:456216"/>
        <dbReference type="EC" id="2.7.1.71"/>
    </reaction>
</comment>
<comment type="cofactor">
    <cofactor evidence="1">
        <name>Mg(2+)</name>
        <dbReference type="ChEBI" id="CHEBI:18420"/>
    </cofactor>
    <text evidence="1">Binds 1 Mg(2+) ion per subunit.</text>
</comment>
<comment type="pathway">
    <text evidence="1">Metabolic intermediate biosynthesis; chorismate biosynthesis; chorismate from D-erythrose 4-phosphate and phosphoenolpyruvate: step 5/7.</text>
</comment>
<comment type="subunit">
    <text evidence="1">Monomer.</text>
</comment>
<comment type="subcellular location">
    <subcellularLocation>
        <location evidence="1">Cytoplasm</location>
    </subcellularLocation>
</comment>
<comment type="domain">
    <text evidence="1">The LID domain closes over the active site upon ATP binding.</text>
</comment>
<comment type="similarity">
    <text evidence="1">Belongs to the shikimate kinase family. AroL subfamily.</text>
</comment>
<sequence length="174" mass="19137">MTQPLFLIGPRGCGKTTVGMALADSLNRRFVDTDQWLQSQLNMTVADIVEREEWAGFRARETAALEAVTAPSTVIATGGGIILTEFNRHFMQNNGIVVYLCAPVSVLVNRLQAAPEEDLRPTLTGKPLSEEVQEVLEERDALYREVAHIIIDATNEPSQVISEIRSALAQTINC</sequence>
<accession>B7MPE9</accession>
<protein>
    <recommendedName>
        <fullName evidence="1">Shikimate kinase 2</fullName>
        <shortName evidence="1">SK 2</shortName>
        <ecNumber evidence="1">2.7.1.71</ecNumber>
    </recommendedName>
</protein>
<evidence type="ECO:0000255" key="1">
    <source>
        <dbReference type="HAMAP-Rule" id="MF_01269"/>
    </source>
</evidence>
<gene>
    <name evidence="1" type="primary">aroL</name>
    <name type="ordered locus">ECED1_0411</name>
</gene>
<proteinExistence type="inferred from homology"/>
<dbReference type="EC" id="2.7.1.71" evidence="1"/>
<dbReference type="EMBL" id="CU928162">
    <property type="protein sequence ID" value="CAR06621.1"/>
    <property type="molecule type" value="Genomic_DNA"/>
</dbReference>
<dbReference type="RefSeq" id="WP_000193384.1">
    <property type="nucleotide sequence ID" value="NC_011745.1"/>
</dbReference>
<dbReference type="SMR" id="B7MPE9"/>
<dbReference type="KEGG" id="ecq:ECED1_0411"/>
<dbReference type="HOGENOM" id="CLU_057607_4_3_6"/>
<dbReference type="UniPathway" id="UPA00053">
    <property type="reaction ID" value="UER00088"/>
</dbReference>
<dbReference type="Proteomes" id="UP000000748">
    <property type="component" value="Chromosome"/>
</dbReference>
<dbReference type="GO" id="GO:0005829">
    <property type="term" value="C:cytosol"/>
    <property type="evidence" value="ECO:0007669"/>
    <property type="project" value="TreeGrafter"/>
</dbReference>
<dbReference type="GO" id="GO:0005524">
    <property type="term" value="F:ATP binding"/>
    <property type="evidence" value="ECO:0007669"/>
    <property type="project" value="UniProtKB-UniRule"/>
</dbReference>
<dbReference type="GO" id="GO:0000287">
    <property type="term" value="F:magnesium ion binding"/>
    <property type="evidence" value="ECO:0007669"/>
    <property type="project" value="UniProtKB-UniRule"/>
</dbReference>
<dbReference type="GO" id="GO:0004765">
    <property type="term" value="F:shikimate kinase activity"/>
    <property type="evidence" value="ECO:0007669"/>
    <property type="project" value="UniProtKB-UniRule"/>
</dbReference>
<dbReference type="GO" id="GO:0008652">
    <property type="term" value="P:amino acid biosynthetic process"/>
    <property type="evidence" value="ECO:0007669"/>
    <property type="project" value="UniProtKB-KW"/>
</dbReference>
<dbReference type="GO" id="GO:0009073">
    <property type="term" value="P:aromatic amino acid family biosynthetic process"/>
    <property type="evidence" value="ECO:0007669"/>
    <property type="project" value="UniProtKB-KW"/>
</dbReference>
<dbReference type="GO" id="GO:0009423">
    <property type="term" value="P:chorismate biosynthetic process"/>
    <property type="evidence" value="ECO:0007669"/>
    <property type="project" value="UniProtKB-UniRule"/>
</dbReference>
<dbReference type="CDD" id="cd00464">
    <property type="entry name" value="SK"/>
    <property type="match status" value="1"/>
</dbReference>
<dbReference type="FunFam" id="3.40.50.300:FF:000408">
    <property type="entry name" value="Shikimate kinase 2"/>
    <property type="match status" value="1"/>
</dbReference>
<dbReference type="Gene3D" id="3.40.50.300">
    <property type="entry name" value="P-loop containing nucleotide triphosphate hydrolases"/>
    <property type="match status" value="1"/>
</dbReference>
<dbReference type="HAMAP" id="MF_00109">
    <property type="entry name" value="Shikimate_kinase"/>
    <property type="match status" value="1"/>
</dbReference>
<dbReference type="HAMAP" id="MF_01269">
    <property type="entry name" value="Shikimate_kinase_2"/>
    <property type="match status" value="1"/>
</dbReference>
<dbReference type="InterPro" id="IPR027417">
    <property type="entry name" value="P-loop_NTPase"/>
</dbReference>
<dbReference type="InterPro" id="IPR031322">
    <property type="entry name" value="Shikimate/glucono_kinase"/>
</dbReference>
<dbReference type="InterPro" id="IPR000623">
    <property type="entry name" value="Shikimate_kinase/TSH1"/>
</dbReference>
<dbReference type="InterPro" id="IPR027544">
    <property type="entry name" value="Shikimate_kinase_2"/>
</dbReference>
<dbReference type="InterPro" id="IPR023000">
    <property type="entry name" value="Shikimate_kinase_CS"/>
</dbReference>
<dbReference type="NCBIfam" id="NF002988">
    <property type="entry name" value="PRK03731.1"/>
    <property type="match status" value="1"/>
</dbReference>
<dbReference type="PANTHER" id="PTHR21087">
    <property type="entry name" value="SHIKIMATE KINASE"/>
    <property type="match status" value="1"/>
</dbReference>
<dbReference type="PANTHER" id="PTHR21087:SF21">
    <property type="entry name" value="SHIKIMATE KINASE 2"/>
    <property type="match status" value="1"/>
</dbReference>
<dbReference type="Pfam" id="PF01202">
    <property type="entry name" value="SKI"/>
    <property type="match status" value="1"/>
</dbReference>
<dbReference type="PRINTS" id="PR01100">
    <property type="entry name" value="SHIKIMTKNASE"/>
</dbReference>
<dbReference type="SUPFAM" id="SSF52540">
    <property type="entry name" value="P-loop containing nucleoside triphosphate hydrolases"/>
    <property type="match status" value="1"/>
</dbReference>
<dbReference type="PROSITE" id="PS01128">
    <property type="entry name" value="SHIKIMATE_KINASE"/>
    <property type="match status" value="1"/>
</dbReference>
<name>AROL_ECO81</name>